<sequence length="296" mass="33464">METVYCTFDHKLSLSDISTLCKLMNIVIPIPAHHHLIGSGNLGLYPIVSSNKDYVHVRNVLRTMVVTILQKVEGNQLVLRKPVTGHQYAIKNTGPFPWEKGDTLTLIPPLSTHSEEKLLKLGDWELTVPLVVPTAIAAEINIRLLCIGLIAVHREYNEMQTIIDELCSIQYRDVLIKLPDIVNDKQSMYSMKTACISLSMITAMAPDIVRTYIDRLTLEDHSMLLIKCQELLSKRTTLNTQRCGQLHATEIKDELKKVKSVLTMIDQINSLTNEKTYFVVCDVSADNRMATCIYKN</sequence>
<reference key="1">
    <citation type="journal article" date="1990" name="J. Virol.">
        <title>Human herpesvirus 6 is closely related to human cytomegalovirus.</title>
        <authorList>
            <person name="Lawrence G.L."/>
            <person name="Chee M."/>
            <person name="Craxton M.A."/>
            <person name="Gompels U.A."/>
            <person name="Honess R.W."/>
            <person name="Barrell B.G."/>
        </authorList>
    </citation>
    <scope>NUCLEOTIDE SEQUENCE [GENOMIC DNA]</scope>
</reference>
<reference key="2">
    <citation type="journal article" date="1995" name="Virology">
        <title>The DNA sequence of human herpesvirus-6: structure, coding content, and genome evolution.</title>
        <authorList>
            <person name="Gompels U.A."/>
            <person name="Nicholas J."/>
            <person name="Lawrence G.L."/>
            <person name="Jones M."/>
            <person name="Thomson B.J."/>
            <person name="Martin M.E.D."/>
            <person name="Efstathiou S."/>
            <person name="Craxton M.A."/>
            <person name="Macaulay H.A."/>
        </authorList>
    </citation>
    <scope>NUCLEOTIDE SEQUENCE [LARGE SCALE GENOMIC DNA]</scope>
</reference>
<keyword id="KW-0167">Capsid protein</keyword>
<keyword id="KW-1048">Host nucleus</keyword>
<keyword id="KW-1185">Reference proteome</keyword>
<keyword id="KW-0946">Virion</keyword>
<accession>P24436</accession>
<protein>
    <recommendedName>
        <fullName evidence="1">Triplex capsid protein 2</fullName>
    </recommendedName>
</protein>
<feature type="chain" id="PRO_0000115727" description="Triplex capsid protein 2">
    <location>
        <begin position="1"/>
        <end position="296"/>
    </location>
</feature>
<organism>
    <name type="scientific">Human herpesvirus 6A (strain Uganda-1102)</name>
    <name type="common">HHV-6 variant A</name>
    <name type="synonym">Human B lymphotropic virus</name>
    <dbReference type="NCBI Taxonomy" id="10370"/>
    <lineage>
        <taxon>Viruses</taxon>
        <taxon>Duplodnaviria</taxon>
        <taxon>Heunggongvirae</taxon>
        <taxon>Peploviricota</taxon>
        <taxon>Herviviricetes</taxon>
        <taxon>Herpesvirales</taxon>
        <taxon>Orthoherpesviridae</taxon>
        <taxon>Betaherpesvirinae</taxon>
        <taxon>Roseolovirus</taxon>
        <taxon>Roseolovirus humanbeta6a</taxon>
        <taxon>Human betaherpesvirus 6A</taxon>
    </lineage>
</organism>
<dbReference type="EMBL" id="X83413">
    <property type="protein sequence ID" value="CAA58390.1"/>
    <property type="molecule type" value="Genomic_DNA"/>
</dbReference>
<dbReference type="EMBL" id="M68963">
    <property type="protein sequence ID" value="AAA65566.1"/>
    <property type="molecule type" value="Genomic_DNA"/>
</dbReference>
<dbReference type="PIR" id="D33560">
    <property type="entry name" value="D33560"/>
</dbReference>
<dbReference type="RefSeq" id="NP_042949.1">
    <property type="nucleotide sequence ID" value="NC_001664.2"/>
</dbReference>
<dbReference type="SMR" id="P24436"/>
<dbReference type="DNASU" id="1487938"/>
<dbReference type="GeneID" id="1487938"/>
<dbReference type="KEGG" id="vg:1487938"/>
<dbReference type="Proteomes" id="UP000009295">
    <property type="component" value="Segment"/>
</dbReference>
<dbReference type="GO" id="GO:0042025">
    <property type="term" value="C:host cell nucleus"/>
    <property type="evidence" value="ECO:0007669"/>
    <property type="project" value="UniProtKB-SubCell"/>
</dbReference>
<dbReference type="GO" id="GO:0019028">
    <property type="term" value="C:viral capsid"/>
    <property type="evidence" value="ECO:0007669"/>
    <property type="project" value="UniProtKB-KW"/>
</dbReference>
<dbReference type="GO" id="GO:0005198">
    <property type="term" value="F:structural molecule activity"/>
    <property type="evidence" value="ECO:0007669"/>
    <property type="project" value="InterPro"/>
</dbReference>
<dbReference type="HAMAP" id="MF_04019">
    <property type="entry name" value="HSV_TRX2"/>
    <property type="match status" value="1"/>
</dbReference>
<dbReference type="InterPro" id="IPR002690">
    <property type="entry name" value="Herpes_capsid_2"/>
</dbReference>
<dbReference type="Pfam" id="PF01802">
    <property type="entry name" value="Herpes_V23"/>
    <property type="match status" value="1"/>
</dbReference>
<comment type="function">
    <text evidence="1">Structural component of the T=16 icosahedral capsid. The capsid is composed of pentamers and hexamers of major capsid protein/MCP, which are linked together by heterotrimers called triplexes. These triplexes are formed by a single molecule of triplex protein 1/TRX1 and two copies of triplex protein 2/TRX2. Additionally, TRX1 is required for efficient transport of TRX2 to the nucleus, which is the site of capsid assembly.</text>
</comment>
<comment type="subunit">
    <text evidence="1">Interacts with TRX1 and major capisd protein/MCP.</text>
</comment>
<comment type="subcellular location">
    <subcellularLocation>
        <location evidence="1">Virion</location>
    </subcellularLocation>
    <subcellularLocation>
        <location evidence="1">Host nucleus</location>
    </subcellularLocation>
</comment>
<comment type="similarity">
    <text evidence="1">Belongs to the herpesviridae TRX2 protein family.</text>
</comment>
<gene>
    <name evidence="1" type="primary">TRX2</name>
    <name type="ordered locus">U56</name>
</gene>
<evidence type="ECO:0000255" key="1">
    <source>
        <dbReference type="HAMAP-Rule" id="MF_04019"/>
    </source>
</evidence>
<proteinExistence type="inferred from homology"/>
<name>TRX2_HHV6U</name>
<organismHost>
    <name type="scientific">Homo sapiens</name>
    <name type="common">Human</name>
    <dbReference type="NCBI Taxonomy" id="9606"/>
</organismHost>